<evidence type="ECO:0000255" key="1"/>
<evidence type="ECO:0000255" key="2">
    <source>
        <dbReference type="PROSITE-ProRule" id="PRU00523"/>
    </source>
</evidence>
<evidence type="ECO:0000305" key="3"/>
<organism>
    <name type="scientific">Niallia circulans</name>
    <name type="common">Bacillus circulans</name>
    <dbReference type="NCBI Taxonomy" id="1397"/>
    <lineage>
        <taxon>Bacteria</taxon>
        <taxon>Bacillati</taxon>
        <taxon>Bacillota</taxon>
        <taxon>Bacilli</taxon>
        <taxon>Bacillales</taxon>
        <taxon>Bacillaceae</taxon>
        <taxon>Niallia</taxon>
    </lineage>
</organism>
<reference key="1">
    <citation type="submission" date="1996-11" db="EMBL/GenBank/DDBJ databases">
        <title>Purification and some properties of cycloisomaltooligosaccharide glucanotransferase and cloning of cit gene from Bacillus circulans U-155.</title>
        <authorList>
            <person name="Oguma T."/>
            <person name="Kurokawa T."/>
            <person name="Tobe K."/>
            <person name="Kitao S."/>
            <person name="Kobayashi M."/>
        </authorList>
    </citation>
    <scope>NUCLEOTIDE SEQUENCE [GENOMIC DNA]</scope>
    <source>
        <strain>U-155</strain>
    </source>
</reference>
<protein>
    <recommendedName>
        <fullName>Cycloisomaltooligosaccharide glucanotransferase</fullName>
        <shortName>CITase</shortName>
        <ecNumber>2.4.1.248</ecNumber>
    </recommendedName>
</protein>
<sequence>MRVKILPLVFMTLLLIVPSQMLLPSGQANASTPGFIERVYTDKARYEPGELVTVTAQINNSGGTNWSGDVTMTIFHLENAVYSSVQHASIASGQTTDVTFSWTSDTTDFKGYFVSVDAGSLGQGYSSIDVSSDFAKYPRYGYISEFSSNETAAESAAKVNELAQDYKINAWQFYDWMWRHETMIKRTGGTIDPTWIDLFNRQISWPTINNQIAAIHNQNGAAMAYAMIYAARENYSGFGVNPEWGMYMDPAHTKQLDVDFGNNSTYMYLFDPANAGWQQFIHEQYLDAIQTANFDGIHIDQMGQRNNIYDYSGNSIDLATRFTPFIKAAKTKLTAANSNQDFMTFNIVDGTVNGWAANDVSKNANVDFLYSEIWHLSNSYMQLKDYIDSLRANSGNKAVVLAAYMNYGENIGDRYEAEDAALQHTAVNTDHAGYTGSGFVDQFADVNDSVTFTITAPEEGYYSLVFRFANHSGYTATRNLYVDSNFEIELPFQNQPNWDTWSHETWHQVYLTPGTHTIKLSYDSSNTGAINLDSLTLGTFDEHSIRLADAMMAASGATHIELGEDSQMLAHEYYPNRSKSMRSTLKSAMKDHYNFITAYENLLFDADVIDNDAGKQFINIAGVNTSPDGAANTVWHMSKRTPEYNILHLINLVNNDQNWRNSGNQPTAQTNLATKVYIGAEETITGVYAASPDHNQGATQSLPFTTGTDSSGSYISFTVPSLEYWSMIYMKRSTAAPVDNMYEAETAIKSNVSVNTNHAGYTGSGFVDQFATVNDGVSFIVHASSKDDYVLRFRYSNGGSDANRDVFLNGKYAGTVQLKHTGGWNQWAYGELTVPLAQGSHSVVLWYNSSNSGAVNLDHLKLDKTYIWQFDRQIASVPAGYRITFKAGLPGWVHFGTDNWKNVMDIPLASNGSSDSSLNYEASIGPFPSATTVDVTFLWDDNNNGILEDMIDRWEGTDFQIAIP</sequence>
<dbReference type="EC" id="2.4.1.248"/>
<dbReference type="EMBL" id="D88360">
    <property type="protein sequence ID" value="BAA13595.1"/>
    <property type="molecule type" value="Genomic_DNA"/>
</dbReference>
<dbReference type="SMR" id="P70873"/>
<dbReference type="CAZy" id="CBM35">
    <property type="family name" value="Carbohydrate-Binding Module Family 35"/>
</dbReference>
<dbReference type="CAZy" id="GH66">
    <property type="family name" value="Glycoside Hydrolase Family 66"/>
</dbReference>
<dbReference type="GO" id="GO:0030246">
    <property type="term" value="F:carbohydrate binding"/>
    <property type="evidence" value="ECO:0007669"/>
    <property type="project" value="InterPro"/>
</dbReference>
<dbReference type="GO" id="GO:0016757">
    <property type="term" value="F:glycosyltransferase activity"/>
    <property type="evidence" value="ECO:0007669"/>
    <property type="project" value="UniProtKB-KW"/>
</dbReference>
<dbReference type="CDD" id="cd04083">
    <property type="entry name" value="CBM35_Lmo2446-like"/>
    <property type="match status" value="2"/>
</dbReference>
<dbReference type="CDD" id="cd14745">
    <property type="entry name" value="GH66"/>
    <property type="match status" value="1"/>
</dbReference>
<dbReference type="Gene3D" id="2.60.120.260">
    <property type="entry name" value="Galactose-binding domain-like"/>
    <property type="match status" value="2"/>
</dbReference>
<dbReference type="Gene3D" id="3.20.20.80">
    <property type="entry name" value="Glycosidases"/>
    <property type="match status" value="1"/>
</dbReference>
<dbReference type="Gene3D" id="2.60.40.1180">
    <property type="entry name" value="Golgi alpha-mannosidase II"/>
    <property type="match status" value="1"/>
</dbReference>
<dbReference type="Gene3D" id="2.60.40.10">
    <property type="entry name" value="Immunoglobulins"/>
    <property type="match status" value="1"/>
</dbReference>
<dbReference type="InterPro" id="IPR011635">
    <property type="entry name" value="CARDB"/>
</dbReference>
<dbReference type="InterPro" id="IPR005084">
    <property type="entry name" value="CBM6"/>
</dbReference>
<dbReference type="InterPro" id="IPR008979">
    <property type="entry name" value="Galactose-bd-like_sf"/>
</dbReference>
<dbReference type="InterPro" id="IPR025092">
    <property type="entry name" value="Glyco_hydro_66"/>
</dbReference>
<dbReference type="InterPro" id="IPR013780">
    <property type="entry name" value="Glyco_hydro_b"/>
</dbReference>
<dbReference type="InterPro" id="IPR051816">
    <property type="entry name" value="Glycosyl_Hydrolase_31"/>
</dbReference>
<dbReference type="InterPro" id="IPR013783">
    <property type="entry name" value="Ig-like_fold"/>
</dbReference>
<dbReference type="PANTHER" id="PTHR43863">
    <property type="entry name" value="HYDROLASE, PUTATIVE (AFU_ORTHOLOGUE AFUA_1G03140)-RELATED"/>
    <property type="match status" value="1"/>
</dbReference>
<dbReference type="PANTHER" id="PTHR43863:SF2">
    <property type="entry name" value="MALTASE-GLUCOAMYLASE"/>
    <property type="match status" value="1"/>
</dbReference>
<dbReference type="Pfam" id="PF07705">
    <property type="entry name" value="CARDB"/>
    <property type="match status" value="1"/>
</dbReference>
<dbReference type="Pfam" id="PF16990">
    <property type="entry name" value="CBM_35"/>
    <property type="match status" value="1"/>
</dbReference>
<dbReference type="Pfam" id="PF03422">
    <property type="entry name" value="CBM_6"/>
    <property type="match status" value="1"/>
</dbReference>
<dbReference type="Pfam" id="PF13199">
    <property type="entry name" value="Glyco_hydro_66"/>
    <property type="match status" value="1"/>
</dbReference>
<dbReference type="SUPFAM" id="SSF49785">
    <property type="entry name" value="Galactose-binding domain-like"/>
    <property type="match status" value="2"/>
</dbReference>
<dbReference type="PROSITE" id="PS51175">
    <property type="entry name" value="CBM6"/>
    <property type="match status" value="2"/>
</dbReference>
<accession>P70873</accession>
<comment type="function">
    <text>Produces cycloisomaltooligosaccharide from dextran.</text>
</comment>
<comment type="catalytic activity">
    <reaction>
        <text>cyclizes part of a (1-&gt;6)-alpha-D-glucan chain by formation of a (1-&gt;6)-alpha-D-glucosidic bond.</text>
        <dbReference type="EC" id="2.4.1.248"/>
    </reaction>
</comment>
<comment type="similarity">
    <text evidence="3">Belongs to the glycosyl hydrolase 66 family.</text>
</comment>
<gene>
    <name type="primary">cit</name>
</gene>
<proteinExistence type="inferred from homology"/>
<keyword id="KW-0328">Glycosyltransferase</keyword>
<keyword id="KW-0677">Repeat</keyword>
<keyword id="KW-0732">Signal</keyword>
<keyword id="KW-0808">Transferase</keyword>
<feature type="signal peptide" evidence="1">
    <location>
        <begin position="1"/>
        <end position="30"/>
    </location>
</feature>
<feature type="chain" id="PRO_0000012242" description="Cycloisomaltooligosaccharide glucanotransferase">
    <location>
        <begin position="31"/>
        <end position="964"/>
    </location>
</feature>
<feature type="domain" description="CBM6 1" evidence="2">
    <location>
        <begin position="413"/>
        <end position="538"/>
    </location>
</feature>
<feature type="domain" description="CBM6 2" evidence="2">
    <location>
        <begin position="740"/>
        <end position="863"/>
    </location>
</feature>
<name>CTA2_NIACI</name>